<reference key="1">
    <citation type="journal article" date="2006" name="J. Bacteriol.">
        <title>Pathogenomic sequence analysis of Bacillus cereus and Bacillus thuringiensis isolates closely related to Bacillus anthracis.</title>
        <authorList>
            <person name="Han C.S."/>
            <person name="Xie G."/>
            <person name="Challacombe J.F."/>
            <person name="Altherr M.R."/>
            <person name="Bhotika S.S."/>
            <person name="Bruce D."/>
            <person name="Campbell C.S."/>
            <person name="Campbell M.L."/>
            <person name="Chen J."/>
            <person name="Chertkov O."/>
            <person name="Cleland C."/>
            <person name="Dimitrijevic M."/>
            <person name="Doggett N.A."/>
            <person name="Fawcett J.J."/>
            <person name="Glavina T."/>
            <person name="Goodwin L.A."/>
            <person name="Hill K.K."/>
            <person name="Hitchcock P."/>
            <person name="Jackson P.J."/>
            <person name="Keim P."/>
            <person name="Kewalramani A.R."/>
            <person name="Longmire J."/>
            <person name="Lucas S."/>
            <person name="Malfatti S."/>
            <person name="McMurry K."/>
            <person name="Meincke L.J."/>
            <person name="Misra M."/>
            <person name="Moseman B.L."/>
            <person name="Mundt M."/>
            <person name="Munk A.C."/>
            <person name="Okinaka R.T."/>
            <person name="Parson-Quintana B."/>
            <person name="Reilly L.P."/>
            <person name="Richardson P."/>
            <person name="Robinson D.L."/>
            <person name="Rubin E."/>
            <person name="Saunders E."/>
            <person name="Tapia R."/>
            <person name="Tesmer J.G."/>
            <person name="Thayer N."/>
            <person name="Thompson L.S."/>
            <person name="Tice H."/>
            <person name="Ticknor L.O."/>
            <person name="Wills P.L."/>
            <person name="Brettin T.S."/>
            <person name="Gilna P."/>
        </authorList>
    </citation>
    <scope>NUCLEOTIDE SEQUENCE [LARGE SCALE GENOMIC DNA]</scope>
    <source>
        <strain>ZK / E33L</strain>
    </source>
</reference>
<gene>
    <name evidence="1" type="primary">smpB</name>
    <name type="ordered locus">BCE33L4817</name>
</gene>
<feature type="chain" id="PRO_0000102900" description="SsrA-binding protein">
    <location>
        <begin position="1"/>
        <end position="155"/>
    </location>
</feature>
<dbReference type="EMBL" id="CP000001">
    <property type="protein sequence ID" value="AAU15461.1"/>
    <property type="molecule type" value="Genomic_DNA"/>
</dbReference>
<dbReference type="RefSeq" id="WP_001123905.1">
    <property type="nucleotide sequence ID" value="NZ_CP009968.1"/>
</dbReference>
<dbReference type="SMR" id="Q631M9"/>
<dbReference type="GeneID" id="45024939"/>
<dbReference type="KEGG" id="bcz:BCE33L4817"/>
<dbReference type="PATRIC" id="fig|288681.22.peg.536"/>
<dbReference type="Proteomes" id="UP000002612">
    <property type="component" value="Chromosome"/>
</dbReference>
<dbReference type="GO" id="GO:0005829">
    <property type="term" value="C:cytosol"/>
    <property type="evidence" value="ECO:0007669"/>
    <property type="project" value="TreeGrafter"/>
</dbReference>
<dbReference type="GO" id="GO:0003723">
    <property type="term" value="F:RNA binding"/>
    <property type="evidence" value="ECO:0007669"/>
    <property type="project" value="UniProtKB-UniRule"/>
</dbReference>
<dbReference type="GO" id="GO:0070929">
    <property type="term" value="P:trans-translation"/>
    <property type="evidence" value="ECO:0007669"/>
    <property type="project" value="UniProtKB-UniRule"/>
</dbReference>
<dbReference type="CDD" id="cd09294">
    <property type="entry name" value="SmpB"/>
    <property type="match status" value="1"/>
</dbReference>
<dbReference type="Gene3D" id="2.40.280.10">
    <property type="match status" value="1"/>
</dbReference>
<dbReference type="HAMAP" id="MF_00023">
    <property type="entry name" value="SmpB"/>
    <property type="match status" value="1"/>
</dbReference>
<dbReference type="InterPro" id="IPR023620">
    <property type="entry name" value="SmpB"/>
</dbReference>
<dbReference type="InterPro" id="IPR000037">
    <property type="entry name" value="SsrA-bd_prot"/>
</dbReference>
<dbReference type="InterPro" id="IPR020081">
    <property type="entry name" value="SsrA-bd_prot_CS"/>
</dbReference>
<dbReference type="NCBIfam" id="NF003843">
    <property type="entry name" value="PRK05422.1"/>
    <property type="match status" value="1"/>
</dbReference>
<dbReference type="NCBIfam" id="TIGR00086">
    <property type="entry name" value="smpB"/>
    <property type="match status" value="1"/>
</dbReference>
<dbReference type="PANTHER" id="PTHR30308:SF2">
    <property type="entry name" value="SSRA-BINDING PROTEIN"/>
    <property type="match status" value="1"/>
</dbReference>
<dbReference type="PANTHER" id="PTHR30308">
    <property type="entry name" value="TMRNA-BINDING COMPONENT OF TRANS-TRANSLATION TAGGING COMPLEX"/>
    <property type="match status" value="1"/>
</dbReference>
<dbReference type="Pfam" id="PF01668">
    <property type="entry name" value="SmpB"/>
    <property type="match status" value="1"/>
</dbReference>
<dbReference type="SUPFAM" id="SSF74982">
    <property type="entry name" value="Small protein B (SmpB)"/>
    <property type="match status" value="1"/>
</dbReference>
<dbReference type="PROSITE" id="PS01317">
    <property type="entry name" value="SSRP"/>
    <property type="match status" value="1"/>
</dbReference>
<evidence type="ECO:0000255" key="1">
    <source>
        <dbReference type="HAMAP-Rule" id="MF_00023"/>
    </source>
</evidence>
<keyword id="KW-0963">Cytoplasm</keyword>
<keyword id="KW-0694">RNA-binding</keyword>
<accession>Q631M9</accession>
<name>SSRP_BACCZ</name>
<organism>
    <name type="scientific">Bacillus cereus (strain ZK / E33L)</name>
    <dbReference type="NCBI Taxonomy" id="288681"/>
    <lineage>
        <taxon>Bacteria</taxon>
        <taxon>Bacillati</taxon>
        <taxon>Bacillota</taxon>
        <taxon>Bacilli</taxon>
        <taxon>Bacillales</taxon>
        <taxon>Bacillaceae</taxon>
        <taxon>Bacillus</taxon>
        <taxon>Bacillus cereus group</taxon>
    </lineage>
</organism>
<comment type="function">
    <text evidence="1">Required for rescue of stalled ribosomes mediated by trans-translation. Binds to transfer-messenger RNA (tmRNA), required for stable association of tmRNA with ribosomes. tmRNA and SmpB together mimic tRNA shape, replacing the anticodon stem-loop with SmpB. tmRNA is encoded by the ssrA gene; the 2 termini fold to resemble tRNA(Ala) and it encodes a 'tag peptide', a short internal open reading frame. During trans-translation Ala-aminoacylated tmRNA acts like a tRNA, entering the A-site of stalled ribosomes, displacing the stalled mRNA. The ribosome then switches to translate the ORF on the tmRNA; the nascent peptide is terminated with the 'tag peptide' encoded by the tmRNA and targeted for degradation. The ribosome is freed to recommence translation, which seems to be the essential function of trans-translation.</text>
</comment>
<comment type="subcellular location">
    <subcellularLocation>
        <location evidence="1">Cytoplasm</location>
    </subcellularLocation>
    <text evidence="1">The tmRNA-SmpB complex associates with stalled 70S ribosomes.</text>
</comment>
<comment type="similarity">
    <text evidence="1">Belongs to the SmpB family.</text>
</comment>
<protein>
    <recommendedName>
        <fullName evidence="1">SsrA-binding protein</fullName>
    </recommendedName>
    <alternativeName>
        <fullName evidence="1">Small protein B</fullName>
    </alternativeName>
</protein>
<sequence length="155" mass="17862">MPKGSGKVIAQNKKAFHDYFIEETYEAGLVLQGTEIKSIRAGRVNLKDAFARVHNGEVWVHNMHISTYEQGNRFNHDPLRTRKLLLHKKEIEKLAGASKETGYALVPVRIYLKNGFAKMALGLAKGKKQYDKRHDLKEKEAKREIARAFRDRQKM</sequence>
<proteinExistence type="inferred from homology"/>